<comment type="function">
    <text>Ferredoxin are iron-sulfur proteins that transfer electrons in a wide variety of metabolic reactions.</text>
</comment>
<comment type="cofactor">
    <cofactor evidence="1">
        <name>[2Fe-2S] cluster</name>
        <dbReference type="ChEBI" id="CHEBI:190135"/>
    </cofactor>
    <text evidence="1">Binds 1 [2Fe-2S] cluster.</text>
</comment>
<comment type="similarity">
    <text evidence="3">Belongs to the adrenodoxin/putidaredoxin family.</text>
</comment>
<sequence>MPKVIFLPNEDFCPEGMVVDAATGDNLLEVAHNAGVEIHHACDGSCACTTCHVIVREGFDSLNETSDQEEDMLDKAWGLEMDSRLSCQCVVGNEDLVVEIPKYNLNHANEAAH</sequence>
<dbReference type="EMBL" id="L42023">
    <property type="protein sequence ID" value="AAC22030.1"/>
    <property type="molecule type" value="Genomic_DNA"/>
</dbReference>
<dbReference type="PIR" id="A64064">
    <property type="entry name" value="A64064"/>
</dbReference>
<dbReference type="RefSeq" id="NP_438533.1">
    <property type="nucleotide sequence ID" value="NC_000907.1"/>
</dbReference>
<dbReference type="SMR" id="P44428"/>
<dbReference type="STRING" id="71421.HI_0372"/>
<dbReference type="EnsemblBacteria" id="AAC22030">
    <property type="protein sequence ID" value="AAC22030"/>
    <property type="gene ID" value="HI_0372"/>
</dbReference>
<dbReference type="KEGG" id="hin:HI_0372"/>
<dbReference type="PATRIC" id="fig|71421.8.peg.390"/>
<dbReference type="eggNOG" id="COG0633">
    <property type="taxonomic scope" value="Bacteria"/>
</dbReference>
<dbReference type="HOGENOM" id="CLU_082632_5_2_6"/>
<dbReference type="OrthoDB" id="9793027at2"/>
<dbReference type="PhylomeDB" id="P44428"/>
<dbReference type="BioCyc" id="HINF71421:G1GJ1-385-MONOMER"/>
<dbReference type="Proteomes" id="UP000000579">
    <property type="component" value="Chromosome"/>
</dbReference>
<dbReference type="GO" id="GO:0005829">
    <property type="term" value="C:cytosol"/>
    <property type="evidence" value="ECO:0000318"/>
    <property type="project" value="GO_Central"/>
</dbReference>
<dbReference type="GO" id="GO:0051537">
    <property type="term" value="F:2 iron, 2 sulfur cluster binding"/>
    <property type="evidence" value="ECO:0007669"/>
    <property type="project" value="UniProtKB-KW"/>
</dbReference>
<dbReference type="GO" id="GO:0009055">
    <property type="term" value="F:electron transfer activity"/>
    <property type="evidence" value="ECO:0000318"/>
    <property type="project" value="GO_Central"/>
</dbReference>
<dbReference type="GO" id="GO:0046872">
    <property type="term" value="F:metal ion binding"/>
    <property type="evidence" value="ECO:0007669"/>
    <property type="project" value="UniProtKB-KW"/>
</dbReference>
<dbReference type="GO" id="GO:0022900">
    <property type="term" value="P:electron transport chain"/>
    <property type="evidence" value="ECO:0000318"/>
    <property type="project" value="GO_Central"/>
</dbReference>
<dbReference type="GO" id="GO:0140647">
    <property type="term" value="P:P450-containing electron transport chain"/>
    <property type="evidence" value="ECO:0007669"/>
    <property type="project" value="InterPro"/>
</dbReference>
<dbReference type="CDD" id="cd00207">
    <property type="entry name" value="fer2"/>
    <property type="match status" value="1"/>
</dbReference>
<dbReference type="Gene3D" id="3.10.20.30">
    <property type="match status" value="1"/>
</dbReference>
<dbReference type="InterPro" id="IPR036010">
    <property type="entry name" value="2Fe-2S_ferredoxin-like_sf"/>
</dbReference>
<dbReference type="InterPro" id="IPR001041">
    <property type="entry name" value="2Fe-2S_ferredoxin-type"/>
</dbReference>
<dbReference type="InterPro" id="IPR001055">
    <property type="entry name" value="Adrenodoxin-like"/>
</dbReference>
<dbReference type="InterPro" id="IPR018298">
    <property type="entry name" value="Adrenodoxin_Fe-S_BS"/>
</dbReference>
<dbReference type="InterPro" id="IPR012675">
    <property type="entry name" value="Beta-grasp_dom_sf"/>
</dbReference>
<dbReference type="InterPro" id="IPR011536">
    <property type="entry name" value="Fdx_isc"/>
</dbReference>
<dbReference type="NCBIfam" id="TIGR02007">
    <property type="entry name" value="fdx_isc"/>
    <property type="match status" value="1"/>
</dbReference>
<dbReference type="PANTHER" id="PTHR23426:SF65">
    <property type="entry name" value="FERREDOXIN-2, MITOCHONDRIAL"/>
    <property type="match status" value="1"/>
</dbReference>
<dbReference type="PANTHER" id="PTHR23426">
    <property type="entry name" value="FERREDOXIN/ADRENODOXIN"/>
    <property type="match status" value="1"/>
</dbReference>
<dbReference type="Pfam" id="PF00111">
    <property type="entry name" value="Fer2"/>
    <property type="match status" value="1"/>
</dbReference>
<dbReference type="PRINTS" id="PR00355">
    <property type="entry name" value="ADRENODOXIN"/>
</dbReference>
<dbReference type="SUPFAM" id="SSF54292">
    <property type="entry name" value="2Fe-2S ferredoxin-like"/>
    <property type="match status" value="1"/>
</dbReference>
<dbReference type="PROSITE" id="PS51085">
    <property type="entry name" value="2FE2S_FER_2"/>
    <property type="match status" value="1"/>
</dbReference>
<dbReference type="PROSITE" id="PS00814">
    <property type="entry name" value="ADX"/>
    <property type="match status" value="1"/>
</dbReference>
<accession>P44428</accession>
<keyword id="KW-0001">2Fe-2S</keyword>
<keyword id="KW-0249">Electron transport</keyword>
<keyword id="KW-0408">Iron</keyword>
<keyword id="KW-0411">Iron-sulfur</keyword>
<keyword id="KW-0479">Metal-binding</keyword>
<keyword id="KW-1185">Reference proteome</keyword>
<keyword id="KW-0813">Transport</keyword>
<evidence type="ECO:0000250" key="1"/>
<evidence type="ECO:0000255" key="2">
    <source>
        <dbReference type="PROSITE-ProRule" id="PRU00465"/>
    </source>
</evidence>
<evidence type="ECO:0000305" key="3"/>
<gene>
    <name type="primary">fdx</name>
    <name type="ordered locus">HI_0372</name>
</gene>
<organism>
    <name type="scientific">Haemophilus influenzae (strain ATCC 51907 / DSM 11121 / KW20 / Rd)</name>
    <dbReference type="NCBI Taxonomy" id="71421"/>
    <lineage>
        <taxon>Bacteria</taxon>
        <taxon>Pseudomonadati</taxon>
        <taxon>Pseudomonadota</taxon>
        <taxon>Gammaproteobacteria</taxon>
        <taxon>Pasteurellales</taxon>
        <taxon>Pasteurellaceae</taxon>
        <taxon>Haemophilus</taxon>
    </lineage>
</organism>
<reference key="1">
    <citation type="journal article" date="1995" name="Science">
        <title>Whole-genome random sequencing and assembly of Haemophilus influenzae Rd.</title>
        <authorList>
            <person name="Fleischmann R.D."/>
            <person name="Adams M.D."/>
            <person name="White O."/>
            <person name="Clayton R.A."/>
            <person name="Kirkness E.F."/>
            <person name="Kerlavage A.R."/>
            <person name="Bult C.J."/>
            <person name="Tomb J.-F."/>
            <person name="Dougherty B.A."/>
            <person name="Merrick J.M."/>
            <person name="McKenney K."/>
            <person name="Sutton G.G."/>
            <person name="FitzHugh W."/>
            <person name="Fields C.A."/>
            <person name="Gocayne J.D."/>
            <person name="Scott J.D."/>
            <person name="Shirley R."/>
            <person name="Liu L.-I."/>
            <person name="Glodek A."/>
            <person name="Kelley J.M."/>
            <person name="Weidman J.F."/>
            <person name="Phillips C.A."/>
            <person name="Spriggs T."/>
            <person name="Hedblom E."/>
            <person name="Cotton M.D."/>
            <person name="Utterback T.R."/>
            <person name="Hanna M.C."/>
            <person name="Nguyen D.T."/>
            <person name="Saudek D.M."/>
            <person name="Brandon R.C."/>
            <person name="Fine L.D."/>
            <person name="Fritchman J.L."/>
            <person name="Fuhrmann J.L."/>
            <person name="Geoghagen N.S.M."/>
            <person name="Gnehm C.L."/>
            <person name="McDonald L.A."/>
            <person name="Small K.V."/>
            <person name="Fraser C.M."/>
            <person name="Smith H.O."/>
            <person name="Venter J.C."/>
        </authorList>
    </citation>
    <scope>NUCLEOTIDE SEQUENCE [LARGE SCALE GENOMIC DNA]</scope>
    <source>
        <strain>ATCC 51907 / DSM 11121 / KW20 / Rd</strain>
    </source>
</reference>
<feature type="initiator methionine" description="Removed" evidence="1">
    <location>
        <position position="1"/>
    </location>
</feature>
<feature type="chain" id="PRO_0000201171" description="2Fe-2S ferredoxin">
    <location>
        <begin position="2"/>
        <end position="113"/>
    </location>
</feature>
<feature type="domain" description="2Fe-2S ferredoxin-type" evidence="2">
    <location>
        <begin position="2"/>
        <end position="104"/>
    </location>
</feature>
<feature type="binding site" evidence="2">
    <location>
        <position position="42"/>
    </location>
    <ligand>
        <name>[2Fe-2S] cluster</name>
        <dbReference type="ChEBI" id="CHEBI:190135"/>
    </ligand>
</feature>
<feature type="binding site" evidence="2">
    <location>
        <position position="48"/>
    </location>
    <ligand>
        <name>[2Fe-2S] cluster</name>
        <dbReference type="ChEBI" id="CHEBI:190135"/>
    </ligand>
</feature>
<feature type="binding site" evidence="2">
    <location>
        <position position="51"/>
    </location>
    <ligand>
        <name>[2Fe-2S] cluster</name>
        <dbReference type="ChEBI" id="CHEBI:190135"/>
    </ligand>
</feature>
<feature type="binding site" evidence="2">
    <location>
        <position position="87"/>
    </location>
    <ligand>
        <name>[2Fe-2S] cluster</name>
        <dbReference type="ChEBI" id="CHEBI:190135"/>
    </ligand>
</feature>
<proteinExistence type="inferred from homology"/>
<name>FER_HAEIN</name>
<protein>
    <recommendedName>
        <fullName>2Fe-2S ferredoxin</fullName>
    </recommendedName>
</protein>